<organism>
    <name type="scientific">Staphylococcus aureus (strain USA300)</name>
    <dbReference type="NCBI Taxonomy" id="367830"/>
    <lineage>
        <taxon>Bacteria</taxon>
        <taxon>Bacillati</taxon>
        <taxon>Bacillota</taxon>
        <taxon>Bacilli</taxon>
        <taxon>Bacillales</taxon>
        <taxon>Staphylococcaceae</taxon>
        <taxon>Staphylococcus</taxon>
    </lineage>
</organism>
<comment type="function">
    <text evidence="1">Single strand-specific metallo-endoribonuclease involved in late-stage 70S ribosome quality control and in maturation of the 3' terminus of the 16S rRNA.</text>
</comment>
<comment type="cofactor">
    <cofactor evidence="1">
        <name>Zn(2+)</name>
        <dbReference type="ChEBI" id="CHEBI:29105"/>
    </cofactor>
    <text evidence="1">Binds 1 zinc ion.</text>
</comment>
<comment type="subcellular location">
    <subcellularLocation>
        <location evidence="1">Cytoplasm</location>
    </subcellularLocation>
</comment>
<comment type="similarity">
    <text evidence="1">Belongs to the endoribonuclease YbeY family.</text>
</comment>
<protein>
    <recommendedName>
        <fullName evidence="1">Endoribonuclease YbeY</fullName>
        <ecNumber evidence="1">3.1.-.-</ecNumber>
    </recommendedName>
</protein>
<keyword id="KW-0963">Cytoplasm</keyword>
<keyword id="KW-0255">Endonuclease</keyword>
<keyword id="KW-0378">Hydrolase</keyword>
<keyword id="KW-0479">Metal-binding</keyword>
<keyword id="KW-0540">Nuclease</keyword>
<keyword id="KW-0690">Ribosome biogenesis</keyword>
<keyword id="KW-0698">rRNA processing</keyword>
<keyword id="KW-0862">Zinc</keyword>
<accession>Q2FGF3</accession>
<proteinExistence type="inferred from homology"/>
<sequence length="155" mass="17952">MFTIDFSDHTGLVKDAWYKQIEDLLEFAKKEEHIEDDAELSVTFVDKQEIQEINRTYRDKDKVTDVISFALEEDEPEIDFSGLDIPRVLGDIIICTDVAQEQANNYGHSFERELGFLALHGFLHLLGYDHMTEADEKEMFGRQDTILNAYGLTRD</sequence>
<dbReference type="EC" id="3.1.-.-" evidence="1"/>
<dbReference type="EMBL" id="CP000255">
    <property type="protein sequence ID" value="ABD20617.1"/>
    <property type="molecule type" value="Genomic_DNA"/>
</dbReference>
<dbReference type="RefSeq" id="WP_000494134.1">
    <property type="nucleotide sequence ID" value="NZ_CP027476.1"/>
</dbReference>
<dbReference type="SMR" id="Q2FGF3"/>
<dbReference type="KEGG" id="saa:SAUSA300_1530"/>
<dbReference type="HOGENOM" id="CLU_106710_3_0_9"/>
<dbReference type="OMA" id="RMRIHPL"/>
<dbReference type="Proteomes" id="UP000001939">
    <property type="component" value="Chromosome"/>
</dbReference>
<dbReference type="GO" id="GO:0005737">
    <property type="term" value="C:cytoplasm"/>
    <property type="evidence" value="ECO:0007669"/>
    <property type="project" value="UniProtKB-SubCell"/>
</dbReference>
<dbReference type="GO" id="GO:0004222">
    <property type="term" value="F:metalloendopeptidase activity"/>
    <property type="evidence" value="ECO:0007669"/>
    <property type="project" value="InterPro"/>
</dbReference>
<dbReference type="GO" id="GO:0004521">
    <property type="term" value="F:RNA endonuclease activity"/>
    <property type="evidence" value="ECO:0007669"/>
    <property type="project" value="UniProtKB-UniRule"/>
</dbReference>
<dbReference type="GO" id="GO:0008270">
    <property type="term" value="F:zinc ion binding"/>
    <property type="evidence" value="ECO:0007669"/>
    <property type="project" value="UniProtKB-UniRule"/>
</dbReference>
<dbReference type="GO" id="GO:0006364">
    <property type="term" value="P:rRNA processing"/>
    <property type="evidence" value="ECO:0007669"/>
    <property type="project" value="UniProtKB-UniRule"/>
</dbReference>
<dbReference type="Gene3D" id="3.40.390.30">
    <property type="entry name" value="Metalloproteases ('zincins'), catalytic domain"/>
    <property type="match status" value="1"/>
</dbReference>
<dbReference type="HAMAP" id="MF_00009">
    <property type="entry name" value="Endoribonucl_YbeY"/>
    <property type="match status" value="1"/>
</dbReference>
<dbReference type="InterPro" id="IPR023091">
    <property type="entry name" value="MetalPrtase_cat_dom_sf_prd"/>
</dbReference>
<dbReference type="InterPro" id="IPR002036">
    <property type="entry name" value="YbeY"/>
</dbReference>
<dbReference type="InterPro" id="IPR020549">
    <property type="entry name" value="YbeY_CS"/>
</dbReference>
<dbReference type="NCBIfam" id="TIGR00043">
    <property type="entry name" value="rRNA maturation RNase YbeY"/>
    <property type="match status" value="1"/>
</dbReference>
<dbReference type="PANTHER" id="PTHR46986">
    <property type="entry name" value="ENDORIBONUCLEASE YBEY, CHLOROPLASTIC"/>
    <property type="match status" value="1"/>
</dbReference>
<dbReference type="PANTHER" id="PTHR46986:SF1">
    <property type="entry name" value="ENDORIBONUCLEASE YBEY, CHLOROPLASTIC"/>
    <property type="match status" value="1"/>
</dbReference>
<dbReference type="Pfam" id="PF02130">
    <property type="entry name" value="YbeY"/>
    <property type="match status" value="1"/>
</dbReference>
<dbReference type="SUPFAM" id="SSF55486">
    <property type="entry name" value="Metalloproteases ('zincins'), catalytic domain"/>
    <property type="match status" value="1"/>
</dbReference>
<dbReference type="PROSITE" id="PS01306">
    <property type="entry name" value="UPF0054"/>
    <property type="match status" value="1"/>
</dbReference>
<evidence type="ECO:0000255" key="1">
    <source>
        <dbReference type="HAMAP-Rule" id="MF_00009"/>
    </source>
</evidence>
<name>YBEY_STAA3</name>
<feature type="chain" id="PRO_0000284321" description="Endoribonuclease YbeY">
    <location>
        <begin position="1"/>
        <end position="155"/>
    </location>
</feature>
<feature type="binding site" evidence="1">
    <location>
        <position position="120"/>
    </location>
    <ligand>
        <name>Zn(2+)</name>
        <dbReference type="ChEBI" id="CHEBI:29105"/>
        <note>catalytic</note>
    </ligand>
</feature>
<feature type="binding site" evidence="1">
    <location>
        <position position="124"/>
    </location>
    <ligand>
        <name>Zn(2+)</name>
        <dbReference type="ChEBI" id="CHEBI:29105"/>
        <note>catalytic</note>
    </ligand>
</feature>
<feature type="binding site" evidence="1">
    <location>
        <position position="130"/>
    </location>
    <ligand>
        <name>Zn(2+)</name>
        <dbReference type="ChEBI" id="CHEBI:29105"/>
        <note>catalytic</note>
    </ligand>
</feature>
<reference key="1">
    <citation type="journal article" date="2006" name="Lancet">
        <title>Complete genome sequence of USA300, an epidemic clone of community-acquired meticillin-resistant Staphylococcus aureus.</title>
        <authorList>
            <person name="Diep B.A."/>
            <person name="Gill S.R."/>
            <person name="Chang R.F."/>
            <person name="Phan T.H."/>
            <person name="Chen J.H."/>
            <person name="Davidson M.G."/>
            <person name="Lin F."/>
            <person name="Lin J."/>
            <person name="Carleton H.A."/>
            <person name="Mongodin E.F."/>
            <person name="Sensabaugh G.F."/>
            <person name="Perdreau-Remington F."/>
        </authorList>
    </citation>
    <scope>NUCLEOTIDE SEQUENCE [LARGE SCALE GENOMIC DNA]</scope>
    <source>
        <strain>USA300</strain>
    </source>
</reference>
<gene>
    <name evidence="1" type="primary">ybeY</name>
    <name type="ordered locus">SAUSA300_1530</name>
</gene>